<keyword id="KW-0153">Cholesterol metabolism</keyword>
<keyword id="KW-0256">Endoplasmic reticulum</keyword>
<keyword id="KW-0325">Glycoprotein</keyword>
<keyword id="KW-0443">Lipid metabolism</keyword>
<keyword id="KW-0472">Membrane</keyword>
<keyword id="KW-1185">Reference proteome</keyword>
<keyword id="KW-0735">Signal-anchor</keyword>
<keyword id="KW-0753">Steroid metabolism</keyword>
<keyword id="KW-1207">Sterol metabolism</keyword>
<keyword id="KW-0812">Transmembrane</keyword>
<keyword id="KW-1133">Transmembrane helix</keyword>
<dbReference type="EMBL" id="CR760081">
    <property type="protein sequence ID" value="CAJ82623.1"/>
    <property type="molecule type" value="mRNA"/>
</dbReference>
<dbReference type="EMBL" id="BC158953">
    <property type="protein sequence ID" value="AAI58954.1"/>
    <property type="molecule type" value="mRNA"/>
</dbReference>
<dbReference type="RefSeq" id="NP_001016719.1">
    <property type="nucleotide sequence ID" value="NM_001016719.2"/>
</dbReference>
<dbReference type="RefSeq" id="XP_012814492.1">
    <property type="nucleotide sequence ID" value="XM_012959038.2"/>
</dbReference>
<dbReference type="RefSeq" id="XP_017947582.1">
    <property type="nucleotide sequence ID" value="XM_018092093.2"/>
</dbReference>
<dbReference type="SMR" id="Q28J34"/>
<dbReference type="FunCoup" id="Q28J34">
    <property type="interactions" value="2295"/>
</dbReference>
<dbReference type="STRING" id="8364.ENSXETP00000042438"/>
<dbReference type="GlyCosmos" id="Q28J34">
    <property type="glycosylation" value="1 site, No reported glycans"/>
</dbReference>
<dbReference type="PaxDb" id="8364-ENSXETP00000052598"/>
<dbReference type="GeneID" id="549473"/>
<dbReference type="KEGG" id="xtr:549473"/>
<dbReference type="AGR" id="Xenbase:XB-GENE-950144"/>
<dbReference type="CTD" id="11160"/>
<dbReference type="Xenbase" id="XB-GENE-950144">
    <property type="gene designation" value="erlin2"/>
</dbReference>
<dbReference type="eggNOG" id="KOG2962">
    <property type="taxonomic scope" value="Eukaryota"/>
</dbReference>
<dbReference type="HOGENOM" id="CLU_058701_0_0_1"/>
<dbReference type="InParanoid" id="Q28J34"/>
<dbReference type="OMA" id="YNMVRNF"/>
<dbReference type="OrthoDB" id="77368at2759"/>
<dbReference type="PhylomeDB" id="Q28J34"/>
<dbReference type="Reactome" id="R-XTR-382556">
    <property type="pathway name" value="ABC-family proteins mediated transport"/>
</dbReference>
<dbReference type="Proteomes" id="UP000008143">
    <property type="component" value="Chromosome 3"/>
</dbReference>
<dbReference type="GO" id="GO:0005789">
    <property type="term" value="C:endoplasmic reticulum membrane"/>
    <property type="evidence" value="ECO:0007669"/>
    <property type="project" value="UniProtKB-SubCell"/>
</dbReference>
<dbReference type="GO" id="GO:0031625">
    <property type="term" value="F:ubiquitin protein ligase binding"/>
    <property type="evidence" value="ECO:0007669"/>
    <property type="project" value="InterPro"/>
</dbReference>
<dbReference type="GO" id="GO:0008203">
    <property type="term" value="P:cholesterol metabolic process"/>
    <property type="evidence" value="ECO:0007669"/>
    <property type="project" value="UniProtKB-KW"/>
</dbReference>
<dbReference type="CDD" id="cd03406">
    <property type="entry name" value="SPFH_like_u3"/>
    <property type="match status" value="1"/>
</dbReference>
<dbReference type="FunFam" id="3.30.479.30:FF:000009">
    <property type="entry name" value="Erlin-2 isoform 1"/>
    <property type="match status" value="1"/>
</dbReference>
<dbReference type="Gene3D" id="3.30.479.30">
    <property type="entry name" value="Band 7 domain"/>
    <property type="match status" value="1"/>
</dbReference>
<dbReference type="InterPro" id="IPR001107">
    <property type="entry name" value="Band_7"/>
</dbReference>
<dbReference type="InterPro" id="IPR036013">
    <property type="entry name" value="Band_7/SPFH_dom_sf"/>
</dbReference>
<dbReference type="InterPro" id="IPR033294">
    <property type="entry name" value="Erlin1/2"/>
</dbReference>
<dbReference type="PANTHER" id="PTHR15351">
    <property type="entry name" value="ERLIN (ER LIPID RAFT ASSOCIATED PROTEIN) HOMOLOG"/>
    <property type="match status" value="1"/>
</dbReference>
<dbReference type="PANTHER" id="PTHR15351:SF4">
    <property type="entry name" value="ERLIN-2"/>
    <property type="match status" value="1"/>
</dbReference>
<dbReference type="Pfam" id="PF01145">
    <property type="entry name" value="Band_7"/>
    <property type="match status" value="1"/>
</dbReference>
<dbReference type="SMART" id="SM00244">
    <property type="entry name" value="PHB"/>
    <property type="match status" value="1"/>
</dbReference>
<reference evidence="5" key="1">
    <citation type="submission" date="2006-10" db="EMBL/GenBank/DDBJ databases">
        <authorList>
            <consortium name="Sanger Xenopus tropicalis EST/cDNA project"/>
        </authorList>
    </citation>
    <scope>NUCLEOTIDE SEQUENCE [LARGE SCALE MRNA]</scope>
    <source>
        <tissue evidence="5">Neurula</tissue>
    </source>
</reference>
<reference evidence="5" key="2">
    <citation type="submission" date="2008-02" db="EMBL/GenBank/DDBJ databases">
        <authorList>
            <consortium name="NIH - Xenopus Gene Collection (XGC) project"/>
        </authorList>
    </citation>
    <scope>NUCLEOTIDE SEQUENCE [LARGE SCALE MRNA]</scope>
    <source>
        <tissue evidence="4">Gastrula</tissue>
    </source>
</reference>
<protein>
    <recommendedName>
        <fullName evidence="1">Erlin-2</fullName>
    </recommendedName>
    <alternativeName>
        <fullName evidence="1">Endoplasmic reticulum lipid raft-associated protein 2</fullName>
    </alternativeName>
    <alternativeName>
        <fullName evidence="1">Stomatin-prohibitin-flotillin-HflC/K domain-containing protein 2</fullName>
        <shortName evidence="1">SPFH domain-containing protein 2</shortName>
    </alternativeName>
</protein>
<feature type="chain" id="PRO_0000378630" description="Erlin-2">
    <location>
        <begin position="1"/>
        <end position="335"/>
    </location>
</feature>
<feature type="topological domain" description="Cytoplasmic" evidence="2">
    <location>
        <begin position="1"/>
        <end position="2"/>
    </location>
</feature>
<feature type="transmembrane region" description="Helical" evidence="2">
    <location>
        <begin position="3"/>
        <end position="23"/>
    </location>
</feature>
<feature type="topological domain" description="Lumenal" evidence="2">
    <location>
        <begin position="24"/>
        <end position="335"/>
    </location>
</feature>
<feature type="region of interest" description="Disordered" evidence="3">
    <location>
        <begin position="310"/>
        <end position="335"/>
    </location>
</feature>
<feature type="compositionally biased region" description="Polar residues" evidence="3">
    <location>
        <begin position="310"/>
        <end position="321"/>
    </location>
</feature>
<feature type="glycosylation site" description="N-linked (GlcNAc...) asparagine" evidence="2">
    <location>
        <position position="106"/>
    </location>
</feature>
<evidence type="ECO:0000250" key="1">
    <source>
        <dbReference type="UniProtKB" id="O94905"/>
    </source>
</evidence>
<evidence type="ECO:0000255" key="2"/>
<evidence type="ECO:0000256" key="3">
    <source>
        <dbReference type="SAM" id="MobiDB-lite"/>
    </source>
</evidence>
<evidence type="ECO:0000312" key="4">
    <source>
        <dbReference type="EMBL" id="AAI58954.1"/>
    </source>
</evidence>
<evidence type="ECO:0000312" key="5">
    <source>
        <dbReference type="EMBL" id="CAJ82623.1"/>
    </source>
</evidence>
<proteinExistence type="evidence at transcript level"/>
<sequence length="335" mass="37148">MSHAGAIAAIGVALIAAALFSAIHKIEEGHVGVYYRGGALLTSTSGPGFHLMLPFITSFKSVQSTMQTDEVKNVPCGTSGGVMIYFDRIEVVNYLIPSAVYDIVKNYTADYDKTLIFNKIHHELNQFCSVHNLQEVYIELFDQIDENLKLALQKDLNSMAPGLVIQAVRVTKPNIPEAIRRNYELMESEKTKLLIAAQKQKVVEKEAETERKKAIIEAEKVAQVAEIKYGQKVMEKETEKKISEIEDSAFVAREKAKADAEYYTSQKTADANRLKLTPEYLQLVKYQAIAANSKIYFGQDIPNMFMDSSAGPSVQSATLLQDDSPALNEPAVGDE</sequence>
<organism>
    <name type="scientific">Xenopus tropicalis</name>
    <name type="common">Western clawed frog</name>
    <name type="synonym">Silurana tropicalis</name>
    <dbReference type="NCBI Taxonomy" id="8364"/>
    <lineage>
        <taxon>Eukaryota</taxon>
        <taxon>Metazoa</taxon>
        <taxon>Chordata</taxon>
        <taxon>Craniata</taxon>
        <taxon>Vertebrata</taxon>
        <taxon>Euteleostomi</taxon>
        <taxon>Amphibia</taxon>
        <taxon>Batrachia</taxon>
        <taxon>Anura</taxon>
        <taxon>Pipoidea</taxon>
        <taxon>Pipidae</taxon>
        <taxon>Xenopodinae</taxon>
        <taxon>Xenopus</taxon>
        <taxon>Silurana</taxon>
    </lineage>
</organism>
<accession>Q28J34</accession>
<name>ERLN2_XENTR</name>
<comment type="function">
    <text evidence="1">Mediates the endoplasmic reticulum-associated degradation (ERAD) of inositol 1,4,5-trisphosphate receptors (IP3Rs). Promotes sterol-accelerated ERAD of HMGCR. Involved in regulation of cellular cholesterol homeostasis by regulation the SREBP signaling pathway (By similarity).</text>
</comment>
<comment type="subcellular location">
    <subcellularLocation>
        <location evidence="1 2">Endoplasmic reticulum membrane</location>
        <topology evidence="1 2">Single-pass type II membrane protein</topology>
    </subcellularLocation>
    <text evidence="1 2">Associated with lipid raft-like domains of the endoplasmic reticulum membrane.</text>
</comment>
<comment type="similarity">
    <text evidence="2">Belongs to the band 7/mec-2 family.</text>
</comment>
<gene>
    <name type="primary">erlin2</name>
    <name evidence="5" type="synonym">spfh2</name>
    <name type="ORF">TNeu008k01.1</name>
</gene>